<sequence>MSLFNNHPELDFTMREMLIDWLINIYFDQNVEISNRSLVSGIMMIDRYIYLEKTSISRKMYQGIGVICLNLACKLDDTKILGLDYCEYICAGIYTADILSNLEKRILKVFKFGLHFKNILHYIKLISIKENVDDTVYVFARLMLITILFKTNYLTIKTKSMAKNLMNFSKWFVNNKNVEIKNPIHIYFFTELRRYITHPHFTSINRLAKEFRIFSLIKSRIPNIIYLEKPNVFSKEIIPIELQNSLTIEYTENQLNNMNVIEKLGIGSFGLVNKVKFDNTEIALKTHHPDDSKEIIVESLREINNMIMLDHPNIIKMHGYYYSQGITHIGLELCDMPLYKKLDKGNLSPELKKSFIIQLLCGLKYLHNNNIIHRDLTSSNVLIKGDTLKICDFGCSRFVYDKKIIGNYSLDVCSVRYRAIEILNGILPYNEKIDIWSCACLIAEILGEKFLFRGRNEIEVLDSINRLLGKTVGSGRVGFSMLEKHYPNETQIIYKMLDFDPSNRPNAKLVLKIFSECFVAQSELLVNNQKTTIDKNQIS</sequence>
<reference key="1">
    <citation type="journal article" date="2004" name="Science">
        <title>The 1.2-megabase genome sequence of Mimivirus.</title>
        <authorList>
            <person name="Raoult D."/>
            <person name="Audic S."/>
            <person name="Robert C."/>
            <person name="Abergel C."/>
            <person name="Renesto P."/>
            <person name="Ogata H."/>
            <person name="La Scola B."/>
            <person name="Susan M."/>
            <person name="Claverie J.-M."/>
        </authorList>
    </citation>
    <scope>NUCLEOTIDE SEQUENCE [LARGE SCALE GENOMIC DNA]</scope>
    <source>
        <strain>Rowbotham-Bradford</strain>
    </source>
</reference>
<organism>
    <name type="scientific">Acanthamoeba polyphaga mimivirus</name>
    <name type="common">APMV</name>
    <dbReference type="NCBI Taxonomy" id="212035"/>
    <lineage>
        <taxon>Viruses</taxon>
        <taxon>Varidnaviria</taxon>
        <taxon>Bamfordvirae</taxon>
        <taxon>Nucleocytoviricota</taxon>
        <taxon>Megaviricetes</taxon>
        <taxon>Imitervirales</taxon>
        <taxon>Mimiviridae</taxon>
        <taxon>Megamimivirinae</taxon>
        <taxon>Mimivirus</taxon>
        <taxon>Mimivirus bradfordmassiliense</taxon>
    </lineage>
</organism>
<name>YL670_MIMIV</name>
<dbReference type="EC" id="2.7.11.1"/>
<dbReference type="EMBL" id="AY653733">
    <property type="protein sequence ID" value="AAV50931.1"/>
    <property type="molecule type" value="Genomic_DNA"/>
</dbReference>
<dbReference type="SMR" id="Q5UNT4"/>
<dbReference type="KEGG" id="vg:9925316"/>
<dbReference type="OrthoDB" id="8955at10239"/>
<dbReference type="Proteomes" id="UP000001134">
    <property type="component" value="Genome"/>
</dbReference>
<dbReference type="GO" id="GO:0005524">
    <property type="term" value="F:ATP binding"/>
    <property type="evidence" value="ECO:0007669"/>
    <property type="project" value="UniProtKB-KW"/>
</dbReference>
<dbReference type="GO" id="GO:0106310">
    <property type="term" value="F:protein serine kinase activity"/>
    <property type="evidence" value="ECO:0007669"/>
    <property type="project" value="RHEA"/>
</dbReference>
<dbReference type="GO" id="GO:0004674">
    <property type="term" value="F:protein serine/threonine kinase activity"/>
    <property type="evidence" value="ECO:0007669"/>
    <property type="project" value="UniProtKB-KW"/>
</dbReference>
<dbReference type="FunFam" id="1.10.510.10:FF:000624">
    <property type="entry name" value="Mitogen-activated protein kinase"/>
    <property type="match status" value="1"/>
</dbReference>
<dbReference type="Gene3D" id="1.10.472.10">
    <property type="entry name" value="Cyclin-like"/>
    <property type="match status" value="2"/>
</dbReference>
<dbReference type="Gene3D" id="3.30.200.20">
    <property type="entry name" value="Phosphorylase Kinase, domain 1"/>
    <property type="match status" value="1"/>
</dbReference>
<dbReference type="Gene3D" id="1.10.510.10">
    <property type="entry name" value="Transferase(Phosphotransferase) domain 1"/>
    <property type="match status" value="1"/>
</dbReference>
<dbReference type="InterPro" id="IPR036915">
    <property type="entry name" value="Cyclin-like_sf"/>
</dbReference>
<dbReference type="InterPro" id="IPR006671">
    <property type="entry name" value="Cyclin_N"/>
</dbReference>
<dbReference type="InterPro" id="IPR011009">
    <property type="entry name" value="Kinase-like_dom_sf"/>
</dbReference>
<dbReference type="InterPro" id="IPR050117">
    <property type="entry name" value="MAP_kinase"/>
</dbReference>
<dbReference type="InterPro" id="IPR000719">
    <property type="entry name" value="Prot_kinase_dom"/>
</dbReference>
<dbReference type="InterPro" id="IPR017441">
    <property type="entry name" value="Protein_kinase_ATP_BS"/>
</dbReference>
<dbReference type="InterPro" id="IPR008266">
    <property type="entry name" value="Tyr_kinase_AS"/>
</dbReference>
<dbReference type="PANTHER" id="PTHR24055">
    <property type="entry name" value="MITOGEN-ACTIVATED PROTEIN KINASE"/>
    <property type="match status" value="1"/>
</dbReference>
<dbReference type="Pfam" id="PF00134">
    <property type="entry name" value="Cyclin_N"/>
    <property type="match status" value="1"/>
</dbReference>
<dbReference type="Pfam" id="PF00069">
    <property type="entry name" value="Pkinase"/>
    <property type="match status" value="1"/>
</dbReference>
<dbReference type="SUPFAM" id="SSF47954">
    <property type="entry name" value="Cyclin-like"/>
    <property type="match status" value="1"/>
</dbReference>
<dbReference type="SUPFAM" id="SSF56112">
    <property type="entry name" value="Protein kinase-like (PK-like)"/>
    <property type="match status" value="1"/>
</dbReference>
<dbReference type="PROSITE" id="PS00107">
    <property type="entry name" value="PROTEIN_KINASE_ATP"/>
    <property type="match status" value="1"/>
</dbReference>
<dbReference type="PROSITE" id="PS50011">
    <property type="entry name" value="PROTEIN_KINASE_DOM"/>
    <property type="match status" value="1"/>
</dbReference>
<dbReference type="PROSITE" id="PS00109">
    <property type="entry name" value="PROTEIN_KINASE_TYR"/>
    <property type="match status" value="1"/>
</dbReference>
<proteinExistence type="inferred from homology"/>
<evidence type="ECO:0000255" key="1">
    <source>
        <dbReference type="PROSITE-ProRule" id="PRU00159"/>
    </source>
</evidence>
<evidence type="ECO:0000255" key="2">
    <source>
        <dbReference type="PROSITE-ProRule" id="PRU10028"/>
    </source>
</evidence>
<protein>
    <recommendedName>
        <fullName>Putative serine/threonine-protein kinase L670</fullName>
        <ecNumber>2.7.11.1</ecNumber>
    </recommendedName>
</protein>
<keyword id="KW-0067">ATP-binding</keyword>
<keyword id="KW-0418">Kinase</keyword>
<keyword id="KW-0547">Nucleotide-binding</keyword>
<keyword id="KW-1185">Reference proteome</keyword>
<keyword id="KW-0723">Serine/threonine-protein kinase</keyword>
<keyword id="KW-0808">Transferase</keyword>
<gene>
    <name type="ordered locus">MIMI_L670</name>
</gene>
<feature type="chain" id="PRO_0000086850" description="Putative serine/threonine-protein kinase L670">
    <location>
        <begin position="1"/>
        <end position="539"/>
    </location>
</feature>
<feature type="domain" description="Cyclin N-terminal">
    <location>
        <begin position="1"/>
        <end position="115"/>
    </location>
</feature>
<feature type="domain" description="Protein kinase" evidence="1">
    <location>
        <begin position="258"/>
        <end position="519"/>
    </location>
</feature>
<feature type="active site" description="Proton acceptor" evidence="1 2">
    <location>
        <position position="375"/>
    </location>
</feature>
<feature type="binding site" evidence="1">
    <location>
        <begin position="264"/>
        <end position="272"/>
    </location>
    <ligand>
        <name>ATP</name>
        <dbReference type="ChEBI" id="CHEBI:30616"/>
    </ligand>
</feature>
<feature type="binding site" evidence="1">
    <location>
        <position position="285"/>
    </location>
    <ligand>
        <name>ATP</name>
        <dbReference type="ChEBI" id="CHEBI:30616"/>
    </ligand>
</feature>
<organismHost>
    <name type="scientific">Acanthamoeba polyphaga</name>
    <name type="common">Amoeba</name>
    <dbReference type="NCBI Taxonomy" id="5757"/>
</organismHost>
<comment type="catalytic activity">
    <reaction>
        <text>L-seryl-[protein] + ATP = O-phospho-L-seryl-[protein] + ADP + H(+)</text>
        <dbReference type="Rhea" id="RHEA:17989"/>
        <dbReference type="Rhea" id="RHEA-COMP:9863"/>
        <dbReference type="Rhea" id="RHEA-COMP:11604"/>
        <dbReference type="ChEBI" id="CHEBI:15378"/>
        <dbReference type="ChEBI" id="CHEBI:29999"/>
        <dbReference type="ChEBI" id="CHEBI:30616"/>
        <dbReference type="ChEBI" id="CHEBI:83421"/>
        <dbReference type="ChEBI" id="CHEBI:456216"/>
        <dbReference type="EC" id="2.7.11.1"/>
    </reaction>
</comment>
<comment type="catalytic activity">
    <reaction>
        <text>L-threonyl-[protein] + ATP = O-phospho-L-threonyl-[protein] + ADP + H(+)</text>
        <dbReference type="Rhea" id="RHEA:46608"/>
        <dbReference type="Rhea" id="RHEA-COMP:11060"/>
        <dbReference type="Rhea" id="RHEA-COMP:11605"/>
        <dbReference type="ChEBI" id="CHEBI:15378"/>
        <dbReference type="ChEBI" id="CHEBI:30013"/>
        <dbReference type="ChEBI" id="CHEBI:30616"/>
        <dbReference type="ChEBI" id="CHEBI:61977"/>
        <dbReference type="ChEBI" id="CHEBI:456216"/>
        <dbReference type="EC" id="2.7.11.1"/>
    </reaction>
</comment>
<comment type="similarity">
    <text evidence="1">Belongs to the protein kinase superfamily. Ser/Thr protein kinase family.</text>
</comment>
<accession>Q5UNT4</accession>